<reference key="1">
    <citation type="journal article" date="2000" name="Nature">
        <title>Sequence and analysis of chromosome 1 of the plant Arabidopsis thaliana.</title>
        <authorList>
            <person name="Theologis A."/>
            <person name="Ecker J.R."/>
            <person name="Palm C.J."/>
            <person name="Federspiel N.A."/>
            <person name="Kaul S."/>
            <person name="White O."/>
            <person name="Alonso J."/>
            <person name="Altafi H."/>
            <person name="Araujo R."/>
            <person name="Bowman C.L."/>
            <person name="Brooks S.Y."/>
            <person name="Buehler E."/>
            <person name="Chan A."/>
            <person name="Chao Q."/>
            <person name="Chen H."/>
            <person name="Cheuk R.F."/>
            <person name="Chin C.W."/>
            <person name="Chung M.K."/>
            <person name="Conn L."/>
            <person name="Conway A.B."/>
            <person name="Conway A.R."/>
            <person name="Creasy T.H."/>
            <person name="Dewar K."/>
            <person name="Dunn P."/>
            <person name="Etgu P."/>
            <person name="Feldblyum T.V."/>
            <person name="Feng J.-D."/>
            <person name="Fong B."/>
            <person name="Fujii C.Y."/>
            <person name="Gill J.E."/>
            <person name="Goldsmith A.D."/>
            <person name="Haas B."/>
            <person name="Hansen N.F."/>
            <person name="Hughes B."/>
            <person name="Huizar L."/>
            <person name="Hunter J.L."/>
            <person name="Jenkins J."/>
            <person name="Johnson-Hopson C."/>
            <person name="Khan S."/>
            <person name="Khaykin E."/>
            <person name="Kim C.J."/>
            <person name="Koo H.L."/>
            <person name="Kremenetskaia I."/>
            <person name="Kurtz D.B."/>
            <person name="Kwan A."/>
            <person name="Lam B."/>
            <person name="Langin-Hooper S."/>
            <person name="Lee A."/>
            <person name="Lee J.M."/>
            <person name="Lenz C.A."/>
            <person name="Li J.H."/>
            <person name="Li Y.-P."/>
            <person name="Lin X."/>
            <person name="Liu S.X."/>
            <person name="Liu Z.A."/>
            <person name="Luros J.S."/>
            <person name="Maiti R."/>
            <person name="Marziali A."/>
            <person name="Militscher J."/>
            <person name="Miranda M."/>
            <person name="Nguyen M."/>
            <person name="Nierman W.C."/>
            <person name="Osborne B.I."/>
            <person name="Pai G."/>
            <person name="Peterson J."/>
            <person name="Pham P.K."/>
            <person name="Rizzo M."/>
            <person name="Rooney T."/>
            <person name="Rowley D."/>
            <person name="Sakano H."/>
            <person name="Salzberg S.L."/>
            <person name="Schwartz J.R."/>
            <person name="Shinn P."/>
            <person name="Southwick A.M."/>
            <person name="Sun H."/>
            <person name="Tallon L.J."/>
            <person name="Tambunga G."/>
            <person name="Toriumi M.J."/>
            <person name="Town C.D."/>
            <person name="Utterback T."/>
            <person name="Van Aken S."/>
            <person name="Vaysberg M."/>
            <person name="Vysotskaia V.S."/>
            <person name="Walker M."/>
            <person name="Wu D."/>
            <person name="Yu G."/>
            <person name="Fraser C.M."/>
            <person name="Venter J.C."/>
            <person name="Davis R.W."/>
        </authorList>
    </citation>
    <scope>NUCLEOTIDE SEQUENCE [LARGE SCALE GENOMIC DNA]</scope>
    <source>
        <strain>cv. Columbia</strain>
    </source>
</reference>
<reference key="2">
    <citation type="journal article" date="2017" name="Plant J.">
        <title>Araport11: a complete reannotation of the Arabidopsis thaliana reference genome.</title>
        <authorList>
            <person name="Cheng C.Y."/>
            <person name="Krishnakumar V."/>
            <person name="Chan A.P."/>
            <person name="Thibaud-Nissen F."/>
            <person name="Schobel S."/>
            <person name="Town C.D."/>
        </authorList>
    </citation>
    <scope>GENOME REANNOTATION</scope>
    <source>
        <strain>cv. Columbia</strain>
    </source>
</reference>
<reference key="3">
    <citation type="journal article" date="2003" name="Science">
        <title>Empirical analysis of transcriptional activity in the Arabidopsis genome.</title>
        <authorList>
            <person name="Yamada K."/>
            <person name="Lim J."/>
            <person name="Dale J.M."/>
            <person name="Chen H."/>
            <person name="Shinn P."/>
            <person name="Palm C.J."/>
            <person name="Southwick A.M."/>
            <person name="Wu H.C."/>
            <person name="Kim C.J."/>
            <person name="Nguyen M."/>
            <person name="Pham P.K."/>
            <person name="Cheuk R.F."/>
            <person name="Karlin-Newmann G."/>
            <person name="Liu S.X."/>
            <person name="Lam B."/>
            <person name="Sakano H."/>
            <person name="Wu T."/>
            <person name="Yu G."/>
            <person name="Miranda M."/>
            <person name="Quach H.L."/>
            <person name="Tripp M."/>
            <person name="Chang C.H."/>
            <person name="Lee J.M."/>
            <person name="Toriumi M.J."/>
            <person name="Chan M.M."/>
            <person name="Tang C.C."/>
            <person name="Onodera C.S."/>
            <person name="Deng J.M."/>
            <person name="Akiyama K."/>
            <person name="Ansari Y."/>
            <person name="Arakawa T."/>
            <person name="Banh J."/>
            <person name="Banno F."/>
            <person name="Bowser L."/>
            <person name="Brooks S.Y."/>
            <person name="Carninci P."/>
            <person name="Chao Q."/>
            <person name="Choy N."/>
            <person name="Enju A."/>
            <person name="Goldsmith A.D."/>
            <person name="Gurjal M."/>
            <person name="Hansen N.F."/>
            <person name="Hayashizaki Y."/>
            <person name="Johnson-Hopson C."/>
            <person name="Hsuan V.W."/>
            <person name="Iida K."/>
            <person name="Karnes M."/>
            <person name="Khan S."/>
            <person name="Koesema E."/>
            <person name="Ishida J."/>
            <person name="Jiang P.X."/>
            <person name="Jones T."/>
            <person name="Kawai J."/>
            <person name="Kamiya A."/>
            <person name="Meyers C."/>
            <person name="Nakajima M."/>
            <person name="Narusaka M."/>
            <person name="Seki M."/>
            <person name="Sakurai T."/>
            <person name="Satou M."/>
            <person name="Tamse R."/>
            <person name="Vaysberg M."/>
            <person name="Wallender E.K."/>
            <person name="Wong C."/>
            <person name="Yamamura Y."/>
            <person name="Yuan S."/>
            <person name="Shinozaki K."/>
            <person name="Davis R.W."/>
            <person name="Theologis A."/>
            <person name="Ecker J.R."/>
        </authorList>
    </citation>
    <scope>NUCLEOTIDE SEQUENCE [LARGE SCALE MRNA]</scope>
    <source>
        <strain>cv. Columbia</strain>
    </source>
</reference>
<reference key="4">
    <citation type="journal article" date="2006" name="Plant Sci.">
        <title>Enzymes of tyrosine catabolism in Arabidopsis thaliana.</title>
        <authorList>
            <person name="Dixon D.P."/>
            <person name="Edwards R."/>
        </authorList>
    </citation>
    <scope>FUNCTION</scope>
    <scope>CATALYTIC ACTIVITY</scope>
    <scope>BIOPHYSICOCHEMICAL PROPERTIES</scope>
</reference>
<reference key="5">
    <citation type="journal article" date="2013" name="Plant Physiol.">
        <title>Disruption of fumarylacetoacetate hydrolase causes spontaneous cell death under short-day conditions in Arabidopsis.</title>
        <authorList>
            <person name="Han C."/>
            <person name="Ren C."/>
            <person name="Zhi T."/>
            <person name="Zhou Z."/>
            <person name="Liu Y."/>
            <person name="Chen F."/>
            <person name="Peng W."/>
            <person name="Xie D."/>
        </authorList>
    </citation>
    <scope>FUNCTION</scope>
    <scope>DISRUPTION PHENOTYPE</scope>
</reference>
<reference key="6">
    <citation type="journal article" date="2016" name="Planta">
        <title>Sugar suppresses cell death caused by disruption of fumarylacetoacetate hydrolase in Arabidopsis.</title>
        <authorList>
            <person name="Zhi T."/>
            <person name="Zhou Z."/>
            <person name="Huang Y."/>
            <person name="Han C."/>
            <person name="Liu Y."/>
            <person name="Zhu Q."/>
            <person name="Ren C."/>
        </authorList>
    </citation>
    <scope>FUNCTION</scope>
</reference>
<organism>
    <name type="scientific">Arabidopsis thaliana</name>
    <name type="common">Mouse-ear cress</name>
    <dbReference type="NCBI Taxonomy" id="3702"/>
    <lineage>
        <taxon>Eukaryota</taxon>
        <taxon>Viridiplantae</taxon>
        <taxon>Streptophyta</taxon>
        <taxon>Embryophyta</taxon>
        <taxon>Tracheophyta</taxon>
        <taxon>Spermatophyta</taxon>
        <taxon>Magnoliopsida</taxon>
        <taxon>eudicotyledons</taxon>
        <taxon>Gunneridae</taxon>
        <taxon>Pentapetalae</taxon>
        <taxon>rosids</taxon>
        <taxon>malvids</taxon>
        <taxon>Brassicales</taxon>
        <taxon>Brassicaceae</taxon>
        <taxon>Camelineae</taxon>
        <taxon>Arabidopsis</taxon>
    </lineage>
</organism>
<sequence length="421" mass="46095">MALLKSFIDVGSDSHFPIQNLPYGVFKPESNSTPRPAVAIGDLVLDLSAISEAGLFDGLILKDADCFLQPNLNKFLAMGRPAWKEARSTLQRILSSNEPILRDNDVLRRKSFHQMSKVEMIVPMVIGDYTDFFASMHHAKNCGLMFRGPENAINPNWFRLPIAYHGRASSIVISGTDIIRPRGQGHPQGNSEPYFGPSKKLDFELEMAAVVGPGNELGKPIDVNNAADHIFGLLLMNDWSARDIQAWEYVPLGPFLGKSFGTTISPWIVTLDALEPFGCQAPKQDPPPLPYLAEKESVNYDISLEVQLKPSGRDDSCVITKSNFQNLYWTITQQLAHHTVNGCNLRPGDLLGTGTISGPEPDSYGCLLELTWNGQKPLSLNGTTQTFLEDGDQVTFSGVCKGDGYNVGFGTCTGKIVPSPP</sequence>
<protein>
    <recommendedName>
        <fullName evidence="7">Fumarylacetoacetase</fullName>
        <ecNumber evidence="2">3.7.1.2</ecNumber>
    </recommendedName>
    <alternativeName>
        <fullName evidence="5">Fumarylacetoacetate hydrolase</fullName>
        <shortName evidence="5">AtFAH</shortName>
    </alternativeName>
    <alternativeName>
        <fullName evidence="6">Protein SHORT-DAY SENSITIVE CELL DEATH 1</fullName>
    </alternativeName>
</protein>
<comment type="function">
    <text evidence="2 3 4">Converts fumarylacetoacetate to acetoacetate and fumarate (PubMed:22980205). Involved in tyrosine catabolic pathway. Catalyzes the final step in the tyrosine degradation pathway (PubMed:22980205, PubMed:23743712, PubMed:27097641).</text>
</comment>
<comment type="catalytic activity">
    <reaction evidence="2">
        <text>4-fumarylacetoacetate + H2O = acetoacetate + fumarate + H(+)</text>
        <dbReference type="Rhea" id="RHEA:10244"/>
        <dbReference type="ChEBI" id="CHEBI:13705"/>
        <dbReference type="ChEBI" id="CHEBI:15377"/>
        <dbReference type="ChEBI" id="CHEBI:15378"/>
        <dbReference type="ChEBI" id="CHEBI:18034"/>
        <dbReference type="ChEBI" id="CHEBI:29806"/>
        <dbReference type="EC" id="3.7.1.2"/>
    </reaction>
</comment>
<comment type="cofactor">
    <cofactor evidence="1">
        <name>Ca(2+)</name>
        <dbReference type="ChEBI" id="CHEBI:29108"/>
    </cofactor>
</comment>
<comment type="cofactor">
    <cofactor evidence="1">
        <name>Mg(2+)</name>
        <dbReference type="ChEBI" id="CHEBI:18420"/>
    </cofactor>
</comment>
<comment type="biophysicochemical properties">
    <kinetics>
        <KM evidence="2">2.7 uM for 4-fumarylacetoacetate</KM>
    </kinetics>
</comment>
<comment type="pathway">
    <text evidence="7">Amino-acid degradation; L-phenylalanine degradation; acetoacetate and fumarate from L-phenylalanine: step 6/6.</text>
</comment>
<comment type="disruption phenotype">
    <text evidence="3">Spontaneous cell death phenotype under short-day conditions.</text>
</comment>
<comment type="similarity">
    <text evidence="7">Belongs to the FAH family.</text>
</comment>
<comment type="sequence caution" evidence="7">
    <conflict type="erroneous gene model prediction">
        <sequence resource="EMBL-CDS" id="AAC17611"/>
    </conflict>
</comment>
<dbReference type="EC" id="3.7.1.2" evidence="2"/>
<dbReference type="EMBL" id="AC002131">
    <property type="protein sequence ID" value="AAC17611.1"/>
    <property type="status" value="ALT_SEQ"/>
    <property type="molecule type" value="Genomic_DNA"/>
</dbReference>
<dbReference type="EMBL" id="CP002684">
    <property type="protein sequence ID" value="AEE28830.1"/>
    <property type="molecule type" value="Genomic_DNA"/>
</dbReference>
<dbReference type="EMBL" id="AY094010">
    <property type="protein sequence ID" value="AAM16166.1"/>
    <property type="molecule type" value="mRNA"/>
</dbReference>
<dbReference type="PIR" id="F86255">
    <property type="entry name" value="F86255"/>
</dbReference>
<dbReference type="RefSeq" id="NP_172669.2">
    <property type="nucleotide sequence ID" value="NM_101077.6"/>
</dbReference>
<dbReference type="SMR" id="Q8RW90"/>
<dbReference type="FunCoup" id="Q8RW90">
    <property type="interactions" value="2637"/>
</dbReference>
<dbReference type="STRING" id="3702.Q8RW90"/>
<dbReference type="PaxDb" id="3702-AT1G12050.1"/>
<dbReference type="ProteomicsDB" id="222377"/>
<dbReference type="EnsemblPlants" id="AT1G12050.1">
    <property type="protein sequence ID" value="AT1G12050.1"/>
    <property type="gene ID" value="AT1G12050"/>
</dbReference>
<dbReference type="GeneID" id="837757"/>
<dbReference type="Gramene" id="AT1G12050.1">
    <property type="protein sequence ID" value="AT1G12050.1"/>
    <property type="gene ID" value="AT1G12050"/>
</dbReference>
<dbReference type="KEGG" id="ath:AT1G12050"/>
<dbReference type="Araport" id="AT1G12050"/>
<dbReference type="TAIR" id="AT1G12050">
    <property type="gene designation" value="FAH"/>
</dbReference>
<dbReference type="eggNOG" id="KOG2843">
    <property type="taxonomic scope" value="Eukaryota"/>
</dbReference>
<dbReference type="HOGENOM" id="CLU_026207_2_0_1"/>
<dbReference type="InParanoid" id="Q8RW90"/>
<dbReference type="OMA" id="YWTAAQQ"/>
<dbReference type="PhylomeDB" id="Q8RW90"/>
<dbReference type="BioCyc" id="ARA:AT1G12050-MONOMER"/>
<dbReference type="BRENDA" id="3.7.1.2">
    <property type="organism ID" value="399"/>
</dbReference>
<dbReference type="UniPathway" id="UPA00139">
    <property type="reaction ID" value="UER00341"/>
</dbReference>
<dbReference type="PRO" id="PR:Q8RW90"/>
<dbReference type="Proteomes" id="UP000006548">
    <property type="component" value="Chromosome 1"/>
</dbReference>
<dbReference type="ExpressionAtlas" id="Q8RW90">
    <property type="expression patterns" value="baseline and differential"/>
</dbReference>
<dbReference type="GO" id="GO:0005829">
    <property type="term" value="C:cytosol"/>
    <property type="evidence" value="ECO:0007005"/>
    <property type="project" value="TAIR"/>
</dbReference>
<dbReference type="GO" id="GO:0005576">
    <property type="term" value="C:extracellular region"/>
    <property type="evidence" value="ECO:0007005"/>
    <property type="project" value="TAIR"/>
</dbReference>
<dbReference type="GO" id="GO:0004334">
    <property type="term" value="F:fumarylacetoacetase activity"/>
    <property type="evidence" value="ECO:0000314"/>
    <property type="project" value="TAIR"/>
</dbReference>
<dbReference type="GO" id="GO:0046872">
    <property type="term" value="F:metal ion binding"/>
    <property type="evidence" value="ECO:0007669"/>
    <property type="project" value="UniProtKB-KW"/>
</dbReference>
<dbReference type="GO" id="GO:0008219">
    <property type="term" value="P:cell death"/>
    <property type="evidence" value="ECO:0000315"/>
    <property type="project" value="TAIR"/>
</dbReference>
<dbReference type="GO" id="GO:1902000">
    <property type="term" value="P:homogentisate catabolic process"/>
    <property type="evidence" value="ECO:0000314"/>
    <property type="project" value="TAIR"/>
</dbReference>
<dbReference type="GO" id="GO:0006559">
    <property type="term" value="P:L-phenylalanine catabolic process"/>
    <property type="evidence" value="ECO:0007669"/>
    <property type="project" value="UniProtKB-UniPathway"/>
</dbReference>
<dbReference type="GO" id="GO:0006572">
    <property type="term" value="P:tyrosine catabolic process"/>
    <property type="evidence" value="ECO:0000316"/>
    <property type="project" value="TAIR"/>
</dbReference>
<dbReference type="FunFam" id="2.30.30.230:FF:000002">
    <property type="entry name" value="Fumarylacetoacetase"/>
    <property type="match status" value="1"/>
</dbReference>
<dbReference type="FunFam" id="3.90.850.10:FF:000004">
    <property type="entry name" value="Fumarylacetoacetase"/>
    <property type="match status" value="1"/>
</dbReference>
<dbReference type="Gene3D" id="2.30.30.230">
    <property type="entry name" value="Fumarylacetoacetase, N-terminal domain"/>
    <property type="match status" value="1"/>
</dbReference>
<dbReference type="Gene3D" id="3.90.850.10">
    <property type="entry name" value="Fumarylacetoacetase-like, C-terminal domain"/>
    <property type="match status" value="1"/>
</dbReference>
<dbReference type="InterPro" id="IPR005959">
    <property type="entry name" value="Fumarylacetoacetase"/>
</dbReference>
<dbReference type="InterPro" id="IPR011234">
    <property type="entry name" value="Fumarylacetoacetase-like_C"/>
</dbReference>
<dbReference type="InterPro" id="IPR036663">
    <property type="entry name" value="Fumarylacetoacetase_C_sf"/>
</dbReference>
<dbReference type="InterPro" id="IPR015377">
    <property type="entry name" value="Fumarylacetoacetase_N"/>
</dbReference>
<dbReference type="InterPro" id="IPR036462">
    <property type="entry name" value="Fumarylacetoacetase_N_sf"/>
</dbReference>
<dbReference type="NCBIfam" id="TIGR01266">
    <property type="entry name" value="fum_ac_acetase"/>
    <property type="match status" value="1"/>
</dbReference>
<dbReference type="PANTHER" id="PTHR43069">
    <property type="entry name" value="FUMARYLACETOACETASE"/>
    <property type="match status" value="1"/>
</dbReference>
<dbReference type="PANTHER" id="PTHR43069:SF2">
    <property type="entry name" value="FUMARYLACETOACETASE"/>
    <property type="match status" value="1"/>
</dbReference>
<dbReference type="Pfam" id="PF01557">
    <property type="entry name" value="FAA_hydrolase"/>
    <property type="match status" value="1"/>
</dbReference>
<dbReference type="Pfam" id="PF09298">
    <property type="entry name" value="FAA_hydrolase_N"/>
    <property type="match status" value="1"/>
</dbReference>
<dbReference type="SUPFAM" id="SSF56529">
    <property type="entry name" value="FAH"/>
    <property type="match status" value="1"/>
</dbReference>
<dbReference type="SUPFAM" id="SSF63433">
    <property type="entry name" value="Fumarylacetoacetate hydrolase, FAH, N-terminal domain"/>
    <property type="match status" value="1"/>
</dbReference>
<accession>Q8RW90</accession>
<accession>O65374</accession>
<evidence type="ECO:0000250" key="1">
    <source>
        <dbReference type="UniProtKB" id="P35505"/>
    </source>
</evidence>
<evidence type="ECO:0000269" key="2">
    <source>
    </source>
</evidence>
<evidence type="ECO:0000269" key="3">
    <source>
    </source>
</evidence>
<evidence type="ECO:0000269" key="4">
    <source>
    </source>
</evidence>
<evidence type="ECO:0000303" key="5">
    <source>
    </source>
</evidence>
<evidence type="ECO:0000303" key="6">
    <source>
    </source>
</evidence>
<evidence type="ECO:0000305" key="7"/>
<evidence type="ECO:0000312" key="8">
    <source>
        <dbReference type="Araport" id="AT1G12050"/>
    </source>
</evidence>
<evidence type="ECO:0000312" key="9">
    <source>
        <dbReference type="EMBL" id="AAC17611.1"/>
    </source>
</evidence>
<name>FAH_ARATH</name>
<feature type="chain" id="PRO_0000442048" description="Fumarylacetoacetase">
    <location>
        <begin position="1"/>
        <end position="421"/>
    </location>
</feature>
<feature type="active site" description="Proton acceptor" evidence="1">
    <location>
        <position position="138"/>
    </location>
</feature>
<feature type="binding site" evidence="1">
    <location>
        <position position="131"/>
    </location>
    <ligand>
        <name>Ca(2+)</name>
        <dbReference type="ChEBI" id="CHEBI:29108"/>
    </ligand>
</feature>
<feature type="binding site" evidence="1">
    <location>
        <position position="147"/>
    </location>
    <ligand>
        <name>substrate</name>
    </ligand>
</feature>
<feature type="binding site" evidence="1">
    <location>
        <position position="204"/>
    </location>
    <ligand>
        <name>Ca(2+)</name>
        <dbReference type="ChEBI" id="CHEBI:29108"/>
    </ligand>
</feature>
<feature type="binding site" evidence="1">
    <location>
        <position position="206"/>
    </location>
    <ligand>
        <name>Ca(2+)</name>
        <dbReference type="ChEBI" id="CHEBI:29108"/>
    </ligand>
</feature>
<feature type="binding site" evidence="1">
    <location>
        <position position="238"/>
    </location>
    <ligand>
        <name>Ca(2+)</name>
        <dbReference type="ChEBI" id="CHEBI:29108"/>
    </ligand>
</feature>
<feature type="binding site" evidence="1">
    <location>
        <position position="238"/>
    </location>
    <ligand>
        <name>Mg(2+)</name>
        <dbReference type="ChEBI" id="CHEBI:18420"/>
    </ligand>
</feature>
<feature type="binding site" evidence="1">
    <location>
        <position position="245"/>
    </location>
    <ligand>
        <name>substrate</name>
    </ligand>
</feature>
<feature type="binding site" evidence="1">
    <location>
        <position position="249"/>
    </location>
    <ligand>
        <name>substrate</name>
    </ligand>
</feature>
<feature type="binding site" evidence="1">
    <location>
        <position position="258"/>
    </location>
    <ligand>
        <name>Mg(2+)</name>
        <dbReference type="ChEBI" id="CHEBI:18420"/>
    </ligand>
</feature>
<feature type="binding site" evidence="1">
    <location>
        <position position="262"/>
    </location>
    <ligand>
        <name>Mg(2+)</name>
        <dbReference type="ChEBI" id="CHEBI:18420"/>
    </ligand>
</feature>
<feature type="binding site" evidence="1">
    <location>
        <position position="355"/>
    </location>
    <ligand>
        <name>substrate</name>
    </ligand>
</feature>
<gene>
    <name evidence="5" type="primary">FAH</name>
    <name evidence="6" type="synonym">SSCD1</name>
    <name evidence="8" type="ordered locus">At1g12050</name>
    <name evidence="9" type="ORF">F12F1.8</name>
</gene>
<proteinExistence type="evidence at protein level"/>
<keyword id="KW-0106">Calcium</keyword>
<keyword id="KW-0378">Hydrolase</keyword>
<keyword id="KW-0460">Magnesium</keyword>
<keyword id="KW-0479">Metal-binding</keyword>
<keyword id="KW-0585">Phenylalanine catabolism</keyword>
<keyword id="KW-1185">Reference proteome</keyword>
<keyword id="KW-0828">Tyrosine catabolism</keyword>